<name>NQRD_PASMU</name>
<feature type="chain" id="PRO_0000214237" description="Na(+)-translocating NADH-quinone reductase subunit D">
    <location>
        <begin position="1"/>
        <end position="208"/>
    </location>
</feature>
<feature type="transmembrane region" description="Helical" evidence="1">
    <location>
        <begin position="42"/>
        <end position="62"/>
    </location>
</feature>
<feature type="transmembrane region" description="Helical" evidence="1">
    <location>
        <begin position="70"/>
        <end position="90"/>
    </location>
</feature>
<feature type="transmembrane region" description="Helical" evidence="1">
    <location>
        <begin position="103"/>
        <end position="123"/>
    </location>
</feature>
<feature type="transmembrane region" description="Helical" evidence="1">
    <location>
        <begin position="131"/>
        <end position="151"/>
    </location>
</feature>
<feature type="transmembrane region" description="Helical" evidence="1">
    <location>
        <begin position="178"/>
        <end position="198"/>
    </location>
</feature>
<reference key="1">
    <citation type="journal article" date="2001" name="Proc. Natl. Acad. Sci. U.S.A.">
        <title>Complete genomic sequence of Pasteurella multocida Pm70.</title>
        <authorList>
            <person name="May B.J."/>
            <person name="Zhang Q."/>
            <person name="Li L.L."/>
            <person name="Paustian M.L."/>
            <person name="Whittam T.S."/>
            <person name="Kapur V."/>
        </authorList>
    </citation>
    <scope>NUCLEOTIDE SEQUENCE [LARGE SCALE GENOMIC DNA]</scope>
    <source>
        <strain>Pm70</strain>
    </source>
</reference>
<dbReference type="EC" id="7.2.1.1" evidence="1"/>
<dbReference type="EMBL" id="AE004439">
    <property type="protein sequence ID" value="AAK03415.1"/>
    <property type="molecule type" value="Genomic_DNA"/>
</dbReference>
<dbReference type="RefSeq" id="WP_005717817.1">
    <property type="nucleotide sequence ID" value="NC_002663.1"/>
</dbReference>
<dbReference type="SMR" id="Q9CLA8"/>
<dbReference type="STRING" id="272843.PM1331"/>
<dbReference type="EnsemblBacteria" id="AAK03415">
    <property type="protein sequence ID" value="AAK03415"/>
    <property type="gene ID" value="PM1331"/>
</dbReference>
<dbReference type="KEGG" id="pmu:PM1331"/>
<dbReference type="HOGENOM" id="CLU_046659_1_1_6"/>
<dbReference type="OrthoDB" id="9782945at2"/>
<dbReference type="Proteomes" id="UP000000809">
    <property type="component" value="Chromosome"/>
</dbReference>
<dbReference type="GO" id="GO:0005886">
    <property type="term" value="C:plasma membrane"/>
    <property type="evidence" value="ECO:0007669"/>
    <property type="project" value="UniProtKB-SubCell"/>
</dbReference>
<dbReference type="GO" id="GO:0016655">
    <property type="term" value="F:oxidoreductase activity, acting on NAD(P)H, quinone or similar compound as acceptor"/>
    <property type="evidence" value="ECO:0007669"/>
    <property type="project" value="UniProtKB-UniRule"/>
</dbReference>
<dbReference type="GO" id="GO:0006814">
    <property type="term" value="P:sodium ion transport"/>
    <property type="evidence" value="ECO:0007669"/>
    <property type="project" value="UniProtKB-UniRule"/>
</dbReference>
<dbReference type="HAMAP" id="MF_00428">
    <property type="entry name" value="NqrD"/>
    <property type="match status" value="1"/>
</dbReference>
<dbReference type="InterPro" id="IPR011292">
    <property type="entry name" value="NqrD"/>
</dbReference>
<dbReference type="InterPro" id="IPR003667">
    <property type="entry name" value="NqrDE/RnfAE"/>
</dbReference>
<dbReference type="NCBIfam" id="TIGR01939">
    <property type="entry name" value="nqrD"/>
    <property type="match status" value="1"/>
</dbReference>
<dbReference type="NCBIfam" id="NF006777">
    <property type="entry name" value="PRK09292.1"/>
    <property type="match status" value="1"/>
</dbReference>
<dbReference type="NCBIfam" id="NF009070">
    <property type="entry name" value="PRK12405.1"/>
    <property type="match status" value="1"/>
</dbReference>
<dbReference type="PANTHER" id="PTHR30586">
    <property type="entry name" value="ELECTRON TRANSPORT COMPLEX PROTEIN RNFE"/>
    <property type="match status" value="1"/>
</dbReference>
<dbReference type="PANTHER" id="PTHR30586:SF1">
    <property type="entry name" value="NA(+)-TRANSLOCATING NADH-QUINONE REDUCTASE SUBUNIT D"/>
    <property type="match status" value="1"/>
</dbReference>
<dbReference type="Pfam" id="PF02508">
    <property type="entry name" value="Rnf-Nqr"/>
    <property type="match status" value="1"/>
</dbReference>
<dbReference type="PIRSF" id="PIRSF006102">
    <property type="entry name" value="NQR_DE"/>
    <property type="match status" value="1"/>
</dbReference>
<gene>
    <name evidence="1" type="primary">nqrD</name>
    <name type="ordered locus">PM1331</name>
</gene>
<accession>Q9CLA8</accession>
<evidence type="ECO:0000255" key="1">
    <source>
        <dbReference type="HAMAP-Rule" id="MF_00428"/>
    </source>
</evidence>
<organism>
    <name type="scientific">Pasteurella multocida (strain Pm70)</name>
    <dbReference type="NCBI Taxonomy" id="272843"/>
    <lineage>
        <taxon>Bacteria</taxon>
        <taxon>Pseudomonadati</taxon>
        <taxon>Pseudomonadota</taxon>
        <taxon>Gammaproteobacteria</taxon>
        <taxon>Pasteurellales</taxon>
        <taxon>Pasteurellaceae</taxon>
        <taxon>Pasteurella</taxon>
    </lineage>
</organism>
<keyword id="KW-0997">Cell inner membrane</keyword>
<keyword id="KW-1003">Cell membrane</keyword>
<keyword id="KW-0406">Ion transport</keyword>
<keyword id="KW-0472">Membrane</keyword>
<keyword id="KW-0520">NAD</keyword>
<keyword id="KW-1185">Reference proteome</keyword>
<keyword id="KW-0915">Sodium</keyword>
<keyword id="KW-0739">Sodium transport</keyword>
<keyword id="KW-1278">Translocase</keyword>
<keyword id="KW-0812">Transmembrane</keyword>
<keyword id="KW-1133">Transmembrane helix</keyword>
<keyword id="KW-0813">Transport</keyword>
<keyword id="KW-0830">Ubiquinone</keyword>
<sequence>MADTKKLKGLLLSPVMDNNPIALQILGICSALAVTTKLETAIVMTFAVIFVTAFSNLFISLIRNYIPNSVRIIVQMAIIASLVILVDQILRAYAYGLSKQLSVFVGLIITNCIVMGRAEAFAMKSQPLESFVDGIGNGLGYGAILVSVAFIRELIGSGKLFGMTVFQTIQDGGWYQTNGLFLLAPSAFFIIGFIIWGIRTLKPNQVEK</sequence>
<comment type="function">
    <text evidence="1">NQR complex catalyzes the reduction of ubiquinone-1 to ubiquinol by two successive reactions, coupled with the transport of Na(+) ions from the cytoplasm to the periplasm. NqrA to NqrE are probably involved in the second step, the conversion of ubisemiquinone to ubiquinol.</text>
</comment>
<comment type="catalytic activity">
    <reaction evidence="1">
        <text>a ubiquinone + n Na(+)(in) + NADH + H(+) = a ubiquinol + n Na(+)(out) + NAD(+)</text>
        <dbReference type="Rhea" id="RHEA:47748"/>
        <dbReference type="Rhea" id="RHEA-COMP:9565"/>
        <dbReference type="Rhea" id="RHEA-COMP:9566"/>
        <dbReference type="ChEBI" id="CHEBI:15378"/>
        <dbReference type="ChEBI" id="CHEBI:16389"/>
        <dbReference type="ChEBI" id="CHEBI:17976"/>
        <dbReference type="ChEBI" id="CHEBI:29101"/>
        <dbReference type="ChEBI" id="CHEBI:57540"/>
        <dbReference type="ChEBI" id="CHEBI:57945"/>
        <dbReference type="EC" id="7.2.1.1"/>
    </reaction>
</comment>
<comment type="subunit">
    <text evidence="1">Composed of six subunits; NqrA, NqrB, NqrC, NqrD, NqrE and NqrF.</text>
</comment>
<comment type="subcellular location">
    <subcellularLocation>
        <location evidence="1">Cell inner membrane</location>
        <topology evidence="1">Multi-pass membrane protein</topology>
    </subcellularLocation>
</comment>
<comment type="similarity">
    <text evidence="1">Belongs to the NqrDE/RnfAE family.</text>
</comment>
<proteinExistence type="inferred from homology"/>
<protein>
    <recommendedName>
        <fullName evidence="1">Na(+)-translocating NADH-quinone reductase subunit D</fullName>
        <shortName evidence="1">Na(+)-NQR subunit D</shortName>
        <shortName evidence="1">Na(+)-translocating NQR subunit D</shortName>
        <ecNumber evidence="1">7.2.1.1</ecNumber>
    </recommendedName>
    <alternativeName>
        <fullName evidence="1">NQR complex subunit D</fullName>
    </alternativeName>
    <alternativeName>
        <fullName evidence="1">NQR-1 subunit D</fullName>
    </alternativeName>
</protein>